<reference evidence="3" key="1">
    <citation type="journal article" date="2014" name="Proc. Natl. Acad. Sci. U.S.A.">
        <title>Single-residue insertion switches the quaternary structure and exciton states of cryptophyte light-harvesting proteins.</title>
        <authorList>
            <person name="Harrop S.J."/>
            <person name="Wilk K.E."/>
            <person name="Dinshaw R."/>
            <person name="Collini E."/>
            <person name="Mirkovic T."/>
            <person name="Teng C.Y."/>
            <person name="Oblinsky D.G."/>
            <person name="Green B.R."/>
            <person name="Hoef-Emden K."/>
            <person name="Hiller R.G."/>
            <person name="Scholes G.D."/>
            <person name="Curmi P.M."/>
        </authorList>
    </citation>
    <scope>NUCLEOTIDE SEQUENCE [MRNA]</scope>
    <scope>X-RAY CRYSTALLOGRAPHY (1.70 ANGSTROMS) OF 48-109 IN COMPLEX WITH PHYCOCYANOBILIN</scope>
    <scope>SUBUNIT</scope>
    <source>
        <strain evidence="3">M1635</strain>
    </source>
</reference>
<proteinExistence type="evidence at protein level"/>
<accession>C0HM13</accession>
<accession>A0A075B5G1</accession>
<accession>A0A075BTU2</accession>
<evidence type="ECO:0000269" key="1">
    <source>
    </source>
</evidence>
<evidence type="ECO:0000305" key="2"/>
<evidence type="ECO:0000312" key="3">
    <source>
        <dbReference type="EMBL" id="AGR45603.1"/>
    </source>
</evidence>
<evidence type="ECO:0007744" key="4">
    <source>
        <dbReference type="PDB" id="4LM6"/>
    </source>
</evidence>
<dbReference type="EMBL" id="KC905458">
    <property type="protein sequence ID" value="AGR45603.1"/>
    <property type="molecule type" value="mRNA"/>
</dbReference>
<dbReference type="PDB" id="4LM6">
    <property type="method" value="X-ray"/>
    <property type="resolution" value="1.70 A"/>
    <property type="chains" value="A/C=48-109"/>
</dbReference>
<dbReference type="PDBsum" id="4LM6"/>
<dbReference type="SMR" id="C0HM13"/>
<dbReference type="GO" id="GO:0009535">
    <property type="term" value="C:chloroplast thylakoid membrane"/>
    <property type="evidence" value="ECO:0007669"/>
    <property type="project" value="UniProtKB-SubCell"/>
</dbReference>
<dbReference type="GO" id="GO:0030089">
    <property type="term" value="C:phycobilisome"/>
    <property type="evidence" value="ECO:0007669"/>
    <property type="project" value="InterPro"/>
</dbReference>
<dbReference type="GO" id="GO:0015979">
    <property type="term" value="P:photosynthesis"/>
    <property type="evidence" value="ECO:0007669"/>
    <property type="project" value="UniProtKB-KW"/>
</dbReference>
<dbReference type="Gene3D" id="3.90.510.10">
    <property type="entry name" value="Phycoerythrin alpha chain"/>
    <property type="match status" value="1"/>
</dbReference>
<dbReference type="InterPro" id="IPR011070">
    <property type="entry name" value="Globular_prot_asu/bsu"/>
</dbReference>
<dbReference type="InterPro" id="IPR037011">
    <property type="entry name" value="Phycoerythr-like_a_sf"/>
</dbReference>
<dbReference type="SUPFAM" id="SSF56568">
    <property type="entry name" value="Non-globular alpha+beta subunits of globular proteins"/>
    <property type="match status" value="1"/>
</dbReference>
<organism>
    <name type="scientific">Hemiselmis virescens</name>
    <dbReference type="NCBI Taxonomy" id="77927"/>
    <lineage>
        <taxon>Eukaryota</taxon>
        <taxon>Cryptophyceae</taxon>
        <taxon>Cryptomonadales</taxon>
        <taxon>Hemiselmidaceae</taxon>
        <taxon>Hemiselmis</taxon>
    </lineage>
</organism>
<comment type="function">
    <text evidence="2">Light-harvesting photosynthetic tetrapyrrole chromophore-protein from the phycobiliprotein complex.</text>
</comment>
<comment type="subunit">
    <text evidence="1">Heterotetramer of 2 identical alpha chains and 2 identical beta chains which form 2 alpha-beta heterodimers within the heterotetramer. The two alpha-beta heterodimers are rotated to an open configuration in contrast to the closed configuration found in other cryptophyte species due to the insertion of a single amino acid, Asp-65, in a conserved region of the alpha chain. In the open form, the central chromophores are not in physical contact but are separated by a water-filled channel.</text>
</comment>
<comment type="subcellular location">
    <subcellularLocation>
        <location evidence="2">Plastid</location>
        <location evidence="2">Chloroplast thylakoid membrane</location>
        <topology evidence="2">Peripheral membrane protein</topology>
        <orientation evidence="2">Lumenal side</orientation>
    </subcellularLocation>
</comment>
<comment type="PTM">
    <text evidence="1">Contains three phycocyanobilin chromophores with binding mediated by both the alpha and beta subunits.</text>
</comment>
<comment type="miscellaneous">
    <text evidence="2">The light-harvesting system in Cryptophytes contains phycobiliprotein complexes. Unusually they are composed of either phycoerythrin (CPE) or phycocyanin (CPC) but never allophycocyanin (APC), with only one type of biliprotein being present in any one species. Unlike cyanobacteria or red algae these proteins are not arranged into higher-order phycobilisome complexes, and they are found in the thylakoid lumen.</text>
</comment>
<comment type="similarity">
    <text evidence="2">Belongs to the phycoerythrin family.</text>
</comment>
<gene>
    <name evidence="3" type="primary">cpeA3</name>
</gene>
<keyword id="KW-0002">3D-structure</keyword>
<keyword id="KW-0089">Bile pigment</keyword>
<keyword id="KW-0150">Chloroplast</keyword>
<keyword id="KW-0157">Chromophore</keyword>
<keyword id="KW-0249">Electron transport</keyword>
<keyword id="KW-0472">Membrane</keyword>
<keyword id="KW-0602">Photosynthesis</keyword>
<keyword id="KW-0934">Plastid</keyword>
<keyword id="KW-0793">Thylakoid</keyword>
<keyword id="KW-0813">Transport</keyword>
<feature type="chain" id="PRO_0000455546" description="Phycoerythrin alpha-3 subunit">
    <location>
        <begin position="1"/>
        <end position="109"/>
    </location>
</feature>
<feature type="binding site" evidence="1 4">
    <location>
        <position position="6"/>
    </location>
    <ligand>
        <name>(2R,3E)-phycocyanobilin</name>
        <dbReference type="ChEBI" id="CHEBI:85275"/>
        <label>1</label>
        <note>ligand shared with beta subunit</note>
    </ligand>
</feature>
<feature type="binding site" evidence="1 4">
    <location>
        <position position="16"/>
    </location>
    <ligand>
        <name>(2R,3E)-phycocyanobilin</name>
        <dbReference type="ChEBI" id="CHEBI:85275"/>
        <label>3</label>
        <note>ligand shared with beta subunit</note>
    </ligand>
</feature>
<feature type="binding site" evidence="1 4">
    <location>
        <position position="17"/>
    </location>
    <ligand>
        <name>(2R,3E)-phycocyanobilin</name>
        <dbReference type="ChEBI" id="CHEBI:85275"/>
        <label>2</label>
        <note>ligand shared with beta subunit</note>
    </ligand>
</feature>
<feature type="binding site" description="covalent" evidence="1 4">
    <location>
        <position position="20"/>
    </location>
    <ligand>
        <name>(2R,3E)-phycocyanobilin</name>
        <dbReference type="ChEBI" id="CHEBI:85275"/>
        <label>3</label>
        <note>ligand shared with beta subunit</note>
    </ligand>
</feature>
<feature type="binding site" evidence="1 4">
    <location>
        <position position="27"/>
    </location>
    <ligand>
        <name>(2R,3E)-phycocyanobilin</name>
        <dbReference type="ChEBI" id="CHEBI:85275"/>
        <label>3</label>
        <note>ligand shared with beta subunit</note>
    </ligand>
</feature>
<feature type="binding site" evidence="1 4">
    <location>
        <position position="28"/>
    </location>
    <ligand>
        <name>(2R,3E)-phycocyanobilin</name>
        <dbReference type="ChEBI" id="CHEBI:85275"/>
        <label>3</label>
        <note>ligand shared with beta subunit</note>
    </ligand>
</feature>
<feature type="binding site" evidence="1 4">
    <location>
        <position position="39"/>
    </location>
    <ligand>
        <name>(2R,3E)-phycocyanobilin</name>
        <dbReference type="ChEBI" id="CHEBI:85275"/>
        <label>3</label>
        <note>ligand shared with beta subunit</note>
    </ligand>
</feature>
<sequence>MYTKAVLLAFVGSAAAFNAPMMTVRRDAIATGAAAAVVAPLLRPAGAKMATDSKAPLIELFDERDGCKGPAANKASDVGEPGLCVKVSMQKVAMNAAAAKSVATNYMRK</sequence>
<geneLocation type="chloroplast" evidence="2"/>
<name>PHEA3_HEMVI</name>
<protein>
    <recommendedName>
        <fullName evidence="2">Phycoerythrin alpha-3 subunit</fullName>
    </recommendedName>
</protein>